<organism>
    <name type="scientific">Saccharomyces cerevisiae (strain ATCC 204508 / S288c)</name>
    <name type="common">Baker's yeast</name>
    <dbReference type="NCBI Taxonomy" id="559292"/>
    <lineage>
        <taxon>Eukaryota</taxon>
        <taxon>Fungi</taxon>
        <taxon>Dikarya</taxon>
        <taxon>Ascomycota</taxon>
        <taxon>Saccharomycotina</taxon>
        <taxon>Saccharomycetes</taxon>
        <taxon>Saccharomycetales</taxon>
        <taxon>Saccharomycetaceae</taxon>
        <taxon>Saccharomyces</taxon>
    </lineage>
</organism>
<dbReference type="EMBL" id="X87611">
    <property type="protein sequence ID" value="CAA60933.1"/>
    <property type="molecule type" value="Genomic_DNA"/>
</dbReference>
<dbReference type="EMBL" id="Z49511">
    <property type="protein sequence ID" value="CAA89534.1"/>
    <property type="molecule type" value="Genomic_DNA"/>
</dbReference>
<dbReference type="EMBL" id="AY557905">
    <property type="protein sequence ID" value="AAS56231.1"/>
    <property type="molecule type" value="Genomic_DNA"/>
</dbReference>
<dbReference type="EMBL" id="BK006943">
    <property type="protein sequence ID" value="DAA08803.1"/>
    <property type="molecule type" value="Genomic_DNA"/>
</dbReference>
<dbReference type="PIR" id="S55199">
    <property type="entry name" value="S55199"/>
</dbReference>
<dbReference type="BioGRID" id="33768">
    <property type="interactions" value="354"/>
</dbReference>
<dbReference type="DIP" id="DIP-5694N"/>
<dbReference type="FunCoup" id="P47086">
    <property type="interactions" value="10"/>
</dbReference>
<dbReference type="IntAct" id="P47086">
    <property type="interactions" value="11"/>
</dbReference>
<dbReference type="MINT" id="P47086"/>
<dbReference type="STRING" id="4932.YJR011C"/>
<dbReference type="PaxDb" id="4932-YJR011C"/>
<dbReference type="PeptideAtlas" id="P47086"/>
<dbReference type="EnsemblFungi" id="YJR011C_mRNA">
    <property type="protein sequence ID" value="YJR011C"/>
    <property type="gene ID" value="YJR011C"/>
</dbReference>
<dbReference type="KEGG" id="sce:YJR011C"/>
<dbReference type="AGR" id="SGD:S000003772"/>
<dbReference type="SGD" id="S000003772">
    <property type="gene designation" value="YJR011C"/>
</dbReference>
<dbReference type="VEuPathDB" id="FungiDB:YJR011C"/>
<dbReference type="eggNOG" id="ENOG502S2FG">
    <property type="taxonomic scope" value="Eukaryota"/>
</dbReference>
<dbReference type="HOGENOM" id="CLU_1066352_0_0_1"/>
<dbReference type="InParanoid" id="P47086"/>
<dbReference type="OMA" id="TSHYMTD"/>
<dbReference type="OrthoDB" id="4036442at2759"/>
<dbReference type="BioCyc" id="YEAST:G3O-31656-MONOMER"/>
<dbReference type="BioGRID-ORCS" id="853468">
    <property type="hits" value="0 hits in 10 CRISPR screens"/>
</dbReference>
<dbReference type="PRO" id="PR:P47086"/>
<dbReference type="Proteomes" id="UP000002311">
    <property type="component" value="Chromosome X"/>
</dbReference>
<dbReference type="RNAct" id="P47086">
    <property type="molecule type" value="protein"/>
</dbReference>
<proteinExistence type="evidence at protein level"/>
<protein>
    <recommendedName>
        <fullName>Uncharacterized protein YJR011C</fullName>
    </recommendedName>
</protein>
<gene>
    <name type="ordered locus">YJR011C</name>
    <name type="ORF">J1438</name>
    <name type="ORF">YJR83.26</name>
</gene>
<accession>P47086</accession>
<accession>D6VWI7</accession>
<accession>Q6Q5N5</accession>
<evidence type="ECO:0000269" key="1">
    <source>
    </source>
</evidence>
<evidence type="ECO:0000305" key="2"/>
<feature type="chain" id="PRO_0000203082" description="Uncharacterized protein YJR011C">
    <location>
        <begin position="1"/>
        <end position="261"/>
    </location>
</feature>
<feature type="sequence conflict" description="In Ref. 3; AAS56231." evidence="2" ref="3">
    <original>N</original>
    <variation>S</variation>
    <location>
        <position position="142"/>
    </location>
</feature>
<keyword id="KW-1185">Reference proteome</keyword>
<comment type="interaction">
    <interactant intactId="EBI-26299">
        <id>P47086</id>
    </interactant>
    <interactant intactId="EBI-23322">
        <id>P53280</id>
        <label>CAF130</label>
    </interactant>
    <organismsDiffer>false</organismsDiffer>
    <experiments>4</experiments>
</comment>
<comment type="interaction">
    <interactant intactId="EBI-26299">
        <id>P47086</id>
    </interactant>
    <interactant intactId="EBI-12184">
        <id>Q12514</id>
        <label>NOT5</label>
    </interactant>
    <organismsDiffer>false</organismsDiffer>
    <experiments>2</experiments>
</comment>
<comment type="miscellaneous">
    <text evidence="1">Present with 2560 molecules/cell in log phase SD medium.</text>
</comment>
<sequence>MSETRESNESTVSSLQTKLLLNDGISENNKKNVILLNQIVPFILNTSHYMTDLMYVLYYLAQKQEDEVLNHSGTFISHKKELLALKSDICELIYDLRTGFRLLLDSCELDHFETPGKCRHLIEKVLVTSIYGVNRYIFQELNRLNVDFKDEFILQMQNCLSGFVNLYKFLNKIPMSKQQSQMNDLQMKILVNVLQNELLPIWKFQLDLLNCKLFNELSKDKGLINIYRKATNDSVIDVSKGEPFIRYVNWLKDQIIGEMTV</sequence>
<reference key="1">
    <citation type="journal article" date="1996" name="EMBO J.">
        <title>Complete nucleotide sequence of Saccharomyces cerevisiae chromosome X.</title>
        <authorList>
            <person name="Galibert F."/>
            <person name="Alexandraki D."/>
            <person name="Baur A."/>
            <person name="Boles E."/>
            <person name="Chalwatzis N."/>
            <person name="Chuat J.-C."/>
            <person name="Coster F."/>
            <person name="Cziepluch C."/>
            <person name="de Haan M."/>
            <person name="Domdey H."/>
            <person name="Durand P."/>
            <person name="Entian K.-D."/>
            <person name="Gatius M."/>
            <person name="Goffeau A."/>
            <person name="Grivell L.A."/>
            <person name="Hennemann A."/>
            <person name="Herbert C.J."/>
            <person name="Heumann K."/>
            <person name="Hilger F."/>
            <person name="Hollenberg C.P."/>
            <person name="Huang M.-E."/>
            <person name="Jacq C."/>
            <person name="Jauniaux J.-C."/>
            <person name="Katsoulou C."/>
            <person name="Kirchrath L."/>
            <person name="Kleine K."/>
            <person name="Kordes E."/>
            <person name="Koetter P."/>
            <person name="Liebl S."/>
            <person name="Louis E.J."/>
            <person name="Manus V."/>
            <person name="Mewes H.-W."/>
            <person name="Miosga T."/>
            <person name="Obermaier B."/>
            <person name="Perea J."/>
            <person name="Pohl T.M."/>
            <person name="Portetelle D."/>
            <person name="Pujol A."/>
            <person name="Purnelle B."/>
            <person name="Ramezani Rad M."/>
            <person name="Rasmussen S.W."/>
            <person name="Rose M."/>
            <person name="Rossau R."/>
            <person name="Schaaff-Gerstenschlaeger I."/>
            <person name="Smits P.H.M."/>
            <person name="Scarcez T."/>
            <person name="Soriano N."/>
            <person name="To Van D."/>
            <person name="Tzermia M."/>
            <person name="Van Broekhoven A."/>
            <person name="Vandenbol M."/>
            <person name="Wedler H."/>
            <person name="von Wettstein D."/>
            <person name="Wambutt R."/>
            <person name="Zagulski M."/>
            <person name="Zollner A."/>
            <person name="Karpfinger-Hartl L."/>
        </authorList>
    </citation>
    <scope>NUCLEOTIDE SEQUENCE [LARGE SCALE GENOMIC DNA]</scope>
    <source>
        <strain>ATCC 204508 / S288c</strain>
    </source>
</reference>
<reference key="2">
    <citation type="journal article" date="2014" name="G3 (Bethesda)">
        <title>The reference genome sequence of Saccharomyces cerevisiae: Then and now.</title>
        <authorList>
            <person name="Engel S.R."/>
            <person name="Dietrich F.S."/>
            <person name="Fisk D.G."/>
            <person name="Binkley G."/>
            <person name="Balakrishnan R."/>
            <person name="Costanzo M.C."/>
            <person name="Dwight S.S."/>
            <person name="Hitz B.C."/>
            <person name="Karra K."/>
            <person name="Nash R.S."/>
            <person name="Weng S."/>
            <person name="Wong E.D."/>
            <person name="Lloyd P."/>
            <person name="Skrzypek M.S."/>
            <person name="Miyasato S.R."/>
            <person name="Simison M."/>
            <person name="Cherry J.M."/>
        </authorList>
    </citation>
    <scope>GENOME REANNOTATION</scope>
    <source>
        <strain>ATCC 204508 / S288c</strain>
    </source>
</reference>
<reference key="3">
    <citation type="journal article" date="2007" name="Genome Res.">
        <title>Approaching a complete repository of sequence-verified protein-encoding clones for Saccharomyces cerevisiae.</title>
        <authorList>
            <person name="Hu Y."/>
            <person name="Rolfs A."/>
            <person name="Bhullar B."/>
            <person name="Murthy T.V.S."/>
            <person name="Zhu C."/>
            <person name="Berger M.F."/>
            <person name="Camargo A.A."/>
            <person name="Kelley F."/>
            <person name="McCarron S."/>
            <person name="Jepson D."/>
            <person name="Richardson A."/>
            <person name="Raphael J."/>
            <person name="Moreira D."/>
            <person name="Taycher E."/>
            <person name="Zuo D."/>
            <person name="Mohr S."/>
            <person name="Kane M.F."/>
            <person name="Williamson J."/>
            <person name="Simpson A.J.G."/>
            <person name="Bulyk M.L."/>
            <person name="Harlow E."/>
            <person name="Marsischky G."/>
            <person name="Kolodner R.D."/>
            <person name="LaBaer J."/>
        </authorList>
    </citation>
    <scope>NUCLEOTIDE SEQUENCE [GENOMIC DNA]</scope>
    <source>
        <strain>ATCC 204508 / S288c</strain>
    </source>
</reference>
<reference key="4">
    <citation type="journal article" date="2003" name="Nature">
        <title>Global analysis of protein expression in yeast.</title>
        <authorList>
            <person name="Ghaemmaghami S."/>
            <person name="Huh W.-K."/>
            <person name="Bower K."/>
            <person name="Howson R.W."/>
            <person name="Belle A."/>
            <person name="Dephoure N."/>
            <person name="O'Shea E.K."/>
            <person name="Weissman J.S."/>
        </authorList>
    </citation>
    <scope>LEVEL OF PROTEIN EXPRESSION [LARGE SCALE ANALYSIS]</scope>
</reference>
<name>YJY1_YEAST</name>